<keyword id="KW-0249">Electron transport</keyword>
<keyword id="KW-0472">Membrane</keyword>
<keyword id="KW-0602">Photosynthesis</keyword>
<keyword id="KW-0604">Photosystem II</keyword>
<keyword id="KW-1185">Reference proteome</keyword>
<keyword id="KW-0732">Signal</keyword>
<keyword id="KW-0793">Thylakoid</keyword>
<keyword id="KW-0813">Transport</keyword>
<protein>
    <recommendedName>
        <fullName evidence="1">Photosystem II extrinsic protein U</fullName>
        <shortName evidence="1">PSII-U</shortName>
        <shortName evidence="1">PsbU</shortName>
    </recommendedName>
    <alternativeName>
        <fullName evidence="1">Photosystem II 12 kDa extrinsic protein</fullName>
        <shortName evidence="1">PS II complex 12 kDa extrinsic protein</shortName>
    </alternativeName>
</protein>
<feature type="signal peptide" evidence="1">
    <location>
        <begin position="1"/>
        <end position="29"/>
    </location>
</feature>
<feature type="chain" id="PRO_0000029597" description="Photosystem II extrinsic protein U">
    <location>
        <begin position="30"/>
        <end position="142"/>
    </location>
</feature>
<comment type="function">
    <text evidence="1">One of the extrinsic, lumenal subunits of photosystem II (PSII). PSII is a light-driven water plastoquinone oxidoreductase, using light energy to abstract electrons from H(2)O, generating a proton gradient subsequently used for ATP formation. The extrinsic proteins stabilize the structure of photosystem II oxygen-evolving complex (OEC), the ion environment of oxygen evolution and protect the OEC against heat-induced inactivation.</text>
</comment>
<comment type="subunit">
    <text evidence="1">PSII is composed of 1 copy each of membrane proteins PsbA, PsbB, PsbC, PsbD, PsbE, PsbF, PsbH, PsbI, PsbJ, PsbK, PsbL, PsbM, PsbT, PsbX, PsbY, PsbZ, Psb30/Ycf12, peripheral proteins PsbO, CyanoQ (PsbQ), PsbU, PsbV and a large number of cofactors. It forms dimeric complexes.</text>
</comment>
<comment type="subcellular location">
    <subcellularLocation>
        <location evidence="1">Cellular thylakoid membrane</location>
        <topology evidence="1">Peripheral membrane protein</topology>
        <orientation evidence="1">Lumenal side</orientation>
    </subcellularLocation>
</comment>
<comment type="similarity">
    <text evidence="1">Belongs to the PsbU family.</text>
</comment>
<comment type="sequence caution" evidence="2">
    <conflict type="erroneous initiation">
        <sequence resource="EMBL-CDS" id="BAB73173"/>
    </conflict>
    <text>Extended N-terminus.</text>
</comment>
<dbReference type="EMBL" id="BA000019">
    <property type="protein sequence ID" value="BAB73173.1"/>
    <property type="status" value="ALT_INIT"/>
    <property type="molecule type" value="Genomic_DNA"/>
</dbReference>
<dbReference type="PIR" id="AE1958">
    <property type="entry name" value="AE1958"/>
</dbReference>
<dbReference type="RefSeq" id="WP_044522799.1">
    <property type="nucleotide sequence ID" value="NZ_RSCN01000021.1"/>
</dbReference>
<dbReference type="SMR" id="Q8YXJ7"/>
<dbReference type="STRING" id="103690.gene:10493230"/>
<dbReference type="KEGG" id="ana:alr1216"/>
<dbReference type="eggNOG" id="COG1555">
    <property type="taxonomic scope" value="Bacteria"/>
</dbReference>
<dbReference type="OrthoDB" id="463369at2"/>
<dbReference type="Proteomes" id="UP000002483">
    <property type="component" value="Chromosome"/>
</dbReference>
<dbReference type="GO" id="GO:0019898">
    <property type="term" value="C:extrinsic component of membrane"/>
    <property type="evidence" value="ECO:0007669"/>
    <property type="project" value="InterPro"/>
</dbReference>
<dbReference type="GO" id="GO:0009654">
    <property type="term" value="C:photosystem II oxygen evolving complex"/>
    <property type="evidence" value="ECO:0007669"/>
    <property type="project" value="InterPro"/>
</dbReference>
<dbReference type="GO" id="GO:0031676">
    <property type="term" value="C:plasma membrane-derived thylakoid membrane"/>
    <property type="evidence" value="ECO:0007669"/>
    <property type="project" value="UniProtKB-SubCell"/>
</dbReference>
<dbReference type="GO" id="GO:0015979">
    <property type="term" value="P:photosynthesis"/>
    <property type="evidence" value="ECO:0007669"/>
    <property type="project" value="UniProtKB-UniRule"/>
</dbReference>
<dbReference type="GO" id="GO:0042549">
    <property type="term" value="P:photosystem II stabilization"/>
    <property type="evidence" value="ECO:0007669"/>
    <property type="project" value="InterPro"/>
</dbReference>
<dbReference type="Gene3D" id="1.10.150.320">
    <property type="entry name" value="Photosystem II 12 kDa extrinsic protein"/>
    <property type="match status" value="1"/>
</dbReference>
<dbReference type="HAMAP" id="MF_00589">
    <property type="entry name" value="PSII_PsbU"/>
    <property type="match status" value="1"/>
</dbReference>
<dbReference type="InterPro" id="IPR010527">
    <property type="entry name" value="PSII_PsbU"/>
</dbReference>
<dbReference type="NCBIfam" id="NF002708">
    <property type="entry name" value="PRK02515.1"/>
    <property type="match status" value="1"/>
</dbReference>
<dbReference type="Pfam" id="PF06514">
    <property type="entry name" value="PsbU"/>
    <property type="match status" value="1"/>
</dbReference>
<dbReference type="SUPFAM" id="SSF81585">
    <property type="entry name" value="PsbU/PolX domain-like"/>
    <property type="match status" value="1"/>
</dbReference>
<gene>
    <name evidence="1" type="primary">psbU</name>
    <name type="ordered locus">alr1216</name>
</gene>
<accession>Q8YXJ7</accession>
<organism>
    <name type="scientific">Nostoc sp. (strain PCC 7120 / SAG 25.82 / UTEX 2576)</name>
    <dbReference type="NCBI Taxonomy" id="103690"/>
    <lineage>
        <taxon>Bacteria</taxon>
        <taxon>Bacillati</taxon>
        <taxon>Cyanobacteriota</taxon>
        <taxon>Cyanophyceae</taxon>
        <taxon>Nostocales</taxon>
        <taxon>Nostocaceae</taxon>
        <taxon>Nostoc</taxon>
    </lineage>
</organism>
<sequence length="142" mass="15845">MKGLVRLLTVFSLLLGCWGWLGTTQIAQAGSLQSFLVPQIPVLAIERQNRADAKLATEFGEKIDLNNTNVRAFQQYPGLYPTLAKKIIQNAPYGKVEDVLNLPGLSDGQKQLLQSNFDKFTVTELEPAFNEGDDRFNNGIYR</sequence>
<name>PSBU_NOSS1</name>
<proteinExistence type="inferred from homology"/>
<evidence type="ECO:0000255" key="1">
    <source>
        <dbReference type="HAMAP-Rule" id="MF_00589"/>
    </source>
</evidence>
<evidence type="ECO:0000305" key="2"/>
<reference key="1">
    <citation type="journal article" date="2001" name="DNA Res.">
        <title>Complete genomic sequence of the filamentous nitrogen-fixing cyanobacterium Anabaena sp. strain PCC 7120.</title>
        <authorList>
            <person name="Kaneko T."/>
            <person name="Nakamura Y."/>
            <person name="Wolk C.P."/>
            <person name="Kuritz T."/>
            <person name="Sasamoto S."/>
            <person name="Watanabe A."/>
            <person name="Iriguchi M."/>
            <person name="Ishikawa A."/>
            <person name="Kawashima K."/>
            <person name="Kimura T."/>
            <person name="Kishida Y."/>
            <person name="Kohara M."/>
            <person name="Matsumoto M."/>
            <person name="Matsuno A."/>
            <person name="Muraki A."/>
            <person name="Nakazaki N."/>
            <person name="Shimpo S."/>
            <person name="Sugimoto M."/>
            <person name="Takazawa M."/>
            <person name="Yamada M."/>
            <person name="Yasuda M."/>
            <person name="Tabata S."/>
        </authorList>
    </citation>
    <scope>NUCLEOTIDE SEQUENCE [LARGE SCALE GENOMIC DNA]</scope>
    <source>
        <strain>PCC 7120 / SAG 25.82 / UTEX 2576</strain>
    </source>
</reference>